<evidence type="ECO:0000250" key="1"/>
<evidence type="ECO:0000256" key="2">
    <source>
        <dbReference type="SAM" id="MobiDB-lite"/>
    </source>
</evidence>
<evidence type="ECO:0000305" key="3"/>
<proteinExistence type="inferred from homology"/>
<sequence length="715" mass="79398">MAAIRLISIGLWSMFGIRLPTQVATGRKSALMSVIGCRTDETDLGGVMEEAEGYENLRVFSELKQFLLGDIRTLQDQLRPSKTNDGDLLSALALAVQMIDGATQGKGGKPLKYDRRIIIVTDGRGSIDTDDLEQIAAKIRDPEAPVDLVLLGVDFDDPDNGFKEEDKSSQKAKNEVSLKGFVEDCNGVFGTLAEAIDQLQIPRLKETRPVPSFKGQLTLGDPGHYDATLTIDVERYPCTMLAKPPTASSFATRTDFGAGSAAGPSDESSHTMTGEEQPMTDLSAVRNQRVYQVDNEEEPGMKKNVEMDELERGYEYGRTAVHISESDMNVVKLETTPMLSLIGFVKAEAFERYLPLSRSNFLVPQRGNQAAQLSLSSFIHALYEADCYAVARLVTKELKPPVIVLLVPRIEVEWEALVDVELPFEEDMRRYKFPPLDRKLTISGKVITEHKDLPTDELTDAMSKYVDAMDLSTFGRDEDGNPAEYAKPEDTFSPIVHRIGHIIRWRATHPDPSLPMPPPSDILTKYANPPADLLDASTSQFEALKKAARVSKVPPKVKGRGKRNRAERDKPISGLDIDALLGNPNRVKIDPSNLVPSFKNALAASDDLETIKEAAQSMSTEIRSLIRSSVGDSGYGRALEALRVMRDELTELEEPEIWNEFIRGLKSDLLEGKLNGNRKDMWWKIRGNRYGLVDRKRSFVSDVTEEEASAFYNVA</sequence>
<name>KU80_PHANO</name>
<organism>
    <name type="scientific">Phaeosphaeria nodorum (strain SN15 / ATCC MYA-4574 / FGSC 10173)</name>
    <name type="common">Glume blotch fungus</name>
    <name type="synonym">Parastagonospora nodorum</name>
    <dbReference type="NCBI Taxonomy" id="321614"/>
    <lineage>
        <taxon>Eukaryota</taxon>
        <taxon>Fungi</taxon>
        <taxon>Dikarya</taxon>
        <taxon>Ascomycota</taxon>
        <taxon>Pezizomycotina</taxon>
        <taxon>Dothideomycetes</taxon>
        <taxon>Pleosporomycetidae</taxon>
        <taxon>Pleosporales</taxon>
        <taxon>Pleosporineae</taxon>
        <taxon>Phaeosphaeriaceae</taxon>
        <taxon>Parastagonospora</taxon>
    </lineage>
</organism>
<feature type="chain" id="PRO_0000278355" description="ATP-dependent DNA helicase II subunit 2">
    <location>
        <begin position="1"/>
        <end position="715"/>
    </location>
</feature>
<feature type="domain" description="Ku">
    <location>
        <begin position="217"/>
        <end position="468"/>
    </location>
</feature>
<feature type="region of interest" description="Disordered" evidence="2">
    <location>
        <begin position="254"/>
        <end position="282"/>
    </location>
</feature>
<accession>Q0U8L4</accession>
<comment type="function">
    <text evidence="1">Single-stranded DNA-dependent ATP-dependent helicase. Involved in non-homologous end joining (NHEJ) DNA double strand break repair. DNA-binding is sequence-independent but has a high affinity to nicks in double-stranded DNA and to the ends of duplex DNA. Binds to naturally occurring chromosomal ends, and therefore provides chromosomal end protection. Required also for telomere recombination to repair telomeric ends in the absence of telomerase. KU70, of the KU70/KU80 heterodimer, binds to the stem loop of TLC1, the RNA component of telomerase. Involved in telomere maintenance. Interacts with telomeric repeats and subtelomeric sequences thereby controlling telomere length and protecting against subtelomeric rearrangement. Maintains telomeric chromatin, which is involved in silencing the expression of genes located at the telomere. Required for mating-type switching (By similarity).</text>
</comment>
<comment type="catalytic activity">
    <reaction>
        <text>ATP + H2O = ADP + phosphate + H(+)</text>
        <dbReference type="Rhea" id="RHEA:13065"/>
        <dbReference type="ChEBI" id="CHEBI:15377"/>
        <dbReference type="ChEBI" id="CHEBI:15378"/>
        <dbReference type="ChEBI" id="CHEBI:30616"/>
        <dbReference type="ChEBI" id="CHEBI:43474"/>
        <dbReference type="ChEBI" id="CHEBI:456216"/>
        <dbReference type="EC" id="3.6.4.12"/>
    </reaction>
</comment>
<comment type="subunit">
    <text evidence="1">Heterodimer of Ku70 and Ku80.</text>
</comment>
<comment type="subcellular location">
    <subcellularLocation>
        <location evidence="1">Nucleus</location>
    </subcellularLocation>
    <subcellularLocation>
        <location evidence="1">Chromosome</location>
        <location evidence="1">Telomere</location>
    </subcellularLocation>
</comment>
<comment type="similarity">
    <text evidence="3">Belongs to the ku80 family.</text>
</comment>
<comment type="sequence caution" evidence="3">
    <conflict type="erroneous gene model prediction">
        <sequence resource="EMBL-CDS" id="EAT80944"/>
    </conflict>
</comment>
<gene>
    <name type="primary">KU80</name>
    <name type="ORF">SNOG_11900</name>
</gene>
<dbReference type="EC" id="3.6.4.12"/>
<dbReference type="EMBL" id="CH445344">
    <property type="protein sequence ID" value="EAT80944.2"/>
    <property type="status" value="ALT_SEQ"/>
    <property type="molecule type" value="Genomic_DNA"/>
</dbReference>
<dbReference type="RefSeq" id="XP_001802136.1">
    <property type="nucleotide sequence ID" value="XM_001802084.1"/>
</dbReference>
<dbReference type="SMR" id="Q0U8L4"/>
<dbReference type="FunCoup" id="Q0U8L4">
    <property type="interactions" value="119"/>
</dbReference>
<dbReference type="STRING" id="321614.Q0U8L4"/>
<dbReference type="GeneID" id="5979044"/>
<dbReference type="KEGG" id="pno:SNOG_11900"/>
<dbReference type="VEuPathDB" id="FungiDB:JI435_119000"/>
<dbReference type="eggNOG" id="KOG2326">
    <property type="taxonomic scope" value="Eukaryota"/>
</dbReference>
<dbReference type="InParanoid" id="Q0U8L4"/>
<dbReference type="OMA" id="WAMQYVW"/>
<dbReference type="Proteomes" id="UP000001055">
    <property type="component" value="Unassembled WGS sequence"/>
</dbReference>
<dbReference type="GO" id="GO:0000781">
    <property type="term" value="C:chromosome, telomeric region"/>
    <property type="evidence" value="ECO:0007669"/>
    <property type="project" value="UniProtKB-SubCell"/>
</dbReference>
<dbReference type="GO" id="GO:0043564">
    <property type="term" value="C:Ku70:Ku80 complex"/>
    <property type="evidence" value="ECO:0000318"/>
    <property type="project" value="GO_Central"/>
</dbReference>
<dbReference type="GO" id="GO:0005524">
    <property type="term" value="F:ATP binding"/>
    <property type="evidence" value="ECO:0007669"/>
    <property type="project" value="UniProtKB-KW"/>
</dbReference>
<dbReference type="GO" id="GO:0016887">
    <property type="term" value="F:ATP hydrolysis activity"/>
    <property type="evidence" value="ECO:0007669"/>
    <property type="project" value="RHEA"/>
</dbReference>
<dbReference type="GO" id="GO:0003684">
    <property type="term" value="F:damaged DNA binding"/>
    <property type="evidence" value="ECO:0007669"/>
    <property type="project" value="InterPro"/>
</dbReference>
<dbReference type="GO" id="GO:0004386">
    <property type="term" value="F:helicase activity"/>
    <property type="evidence" value="ECO:0007669"/>
    <property type="project" value="UniProtKB-KW"/>
</dbReference>
<dbReference type="GO" id="GO:0042162">
    <property type="term" value="F:telomeric DNA binding"/>
    <property type="evidence" value="ECO:0000318"/>
    <property type="project" value="GO_Central"/>
</dbReference>
<dbReference type="GO" id="GO:0006310">
    <property type="term" value="P:DNA recombination"/>
    <property type="evidence" value="ECO:0007669"/>
    <property type="project" value="UniProtKB-KW"/>
</dbReference>
<dbReference type="GO" id="GO:0006303">
    <property type="term" value="P:double-strand break repair via nonhomologous end joining"/>
    <property type="evidence" value="ECO:0000318"/>
    <property type="project" value="GO_Central"/>
</dbReference>
<dbReference type="GO" id="GO:0000723">
    <property type="term" value="P:telomere maintenance"/>
    <property type="evidence" value="ECO:0000318"/>
    <property type="project" value="GO_Central"/>
</dbReference>
<dbReference type="CDD" id="cd00873">
    <property type="entry name" value="KU80"/>
    <property type="match status" value="1"/>
</dbReference>
<dbReference type="FunFam" id="1.25.40.240:FF:000002">
    <property type="entry name" value="ATP-dependent DNA helicase II subunit 2"/>
    <property type="match status" value="1"/>
</dbReference>
<dbReference type="FunFam" id="2.40.290.10:FF:000008">
    <property type="entry name" value="ATP-dependent DNA helicase II subunit 2"/>
    <property type="match status" value="1"/>
</dbReference>
<dbReference type="FunFam" id="3.40.50.410:FF:000073">
    <property type="entry name" value="ATP-dependent DNA helicase II subunit 2"/>
    <property type="match status" value="1"/>
</dbReference>
<dbReference type="FunFam" id="1.10.1600.10:FF:000002">
    <property type="entry name" value="X-ray repair cross-complementing protein 5"/>
    <property type="match status" value="1"/>
</dbReference>
<dbReference type="Gene3D" id="1.10.1600.10">
    <property type="match status" value="1"/>
</dbReference>
<dbReference type="Gene3D" id="2.40.290.10">
    <property type="match status" value="1"/>
</dbReference>
<dbReference type="Gene3D" id="1.25.40.240">
    <property type="entry name" value="Ku, C-terminal domain"/>
    <property type="match status" value="1"/>
</dbReference>
<dbReference type="Gene3D" id="3.40.50.410">
    <property type="entry name" value="von Willebrand factor, type A domain"/>
    <property type="match status" value="1"/>
</dbReference>
<dbReference type="InterPro" id="IPR006164">
    <property type="entry name" value="Ku70/Ku80_beta-barrel_dom"/>
</dbReference>
<dbReference type="InterPro" id="IPR024193">
    <property type="entry name" value="Ku80"/>
</dbReference>
<dbReference type="InterPro" id="IPR036494">
    <property type="entry name" value="Ku_C_sf"/>
</dbReference>
<dbReference type="InterPro" id="IPR014893">
    <property type="entry name" value="Ku_PK_bind"/>
</dbReference>
<dbReference type="InterPro" id="IPR016194">
    <property type="entry name" value="SPOC-like_C_dom_sf"/>
</dbReference>
<dbReference type="InterPro" id="IPR002035">
    <property type="entry name" value="VWF_A"/>
</dbReference>
<dbReference type="InterPro" id="IPR036465">
    <property type="entry name" value="vWFA_dom_sf"/>
</dbReference>
<dbReference type="PANTHER" id="PTHR12604">
    <property type="entry name" value="KU AUTOANTIGEN DNA HELICASE"/>
    <property type="match status" value="1"/>
</dbReference>
<dbReference type="PANTHER" id="PTHR12604:SF4">
    <property type="entry name" value="X-RAY REPAIR CROSS-COMPLEMENTING PROTEIN 5"/>
    <property type="match status" value="1"/>
</dbReference>
<dbReference type="Pfam" id="PF02735">
    <property type="entry name" value="Ku"/>
    <property type="match status" value="1"/>
</dbReference>
<dbReference type="Pfam" id="PF08785">
    <property type="entry name" value="Ku_PK_bind"/>
    <property type="match status" value="1"/>
</dbReference>
<dbReference type="SMART" id="SM00559">
    <property type="entry name" value="Ku78"/>
    <property type="match status" value="1"/>
</dbReference>
<dbReference type="SUPFAM" id="SSF101420">
    <property type="entry name" value="C-terminal domain of Ku80"/>
    <property type="match status" value="1"/>
</dbReference>
<dbReference type="SUPFAM" id="SSF100939">
    <property type="entry name" value="SPOC domain-like"/>
    <property type="match status" value="1"/>
</dbReference>
<dbReference type="SUPFAM" id="SSF53300">
    <property type="entry name" value="vWA-like"/>
    <property type="match status" value="1"/>
</dbReference>
<reference key="1">
    <citation type="journal article" date="2007" name="Plant Cell">
        <title>Dothideomycete-plant interactions illuminated by genome sequencing and EST analysis of the wheat pathogen Stagonospora nodorum.</title>
        <authorList>
            <person name="Hane J.K."/>
            <person name="Lowe R.G.T."/>
            <person name="Solomon P.S."/>
            <person name="Tan K.-C."/>
            <person name="Schoch C.L."/>
            <person name="Spatafora J.W."/>
            <person name="Crous P.W."/>
            <person name="Kodira C.D."/>
            <person name="Birren B.W."/>
            <person name="Galagan J.E."/>
            <person name="Torriani S.F.F."/>
            <person name="McDonald B.A."/>
            <person name="Oliver R.P."/>
        </authorList>
    </citation>
    <scope>NUCLEOTIDE SEQUENCE [LARGE SCALE GENOMIC DNA]</scope>
    <source>
        <strain>SN15 / ATCC MYA-4574 / FGSC 10173</strain>
    </source>
</reference>
<keyword id="KW-0067">ATP-binding</keyword>
<keyword id="KW-0158">Chromosome</keyword>
<keyword id="KW-0227">DNA damage</keyword>
<keyword id="KW-0233">DNA recombination</keyword>
<keyword id="KW-0234">DNA repair</keyword>
<keyword id="KW-0238">DNA-binding</keyword>
<keyword id="KW-0347">Helicase</keyword>
<keyword id="KW-0378">Hydrolase</keyword>
<keyword id="KW-0547">Nucleotide-binding</keyword>
<keyword id="KW-0539">Nucleus</keyword>
<keyword id="KW-0779">Telomere</keyword>
<protein>
    <recommendedName>
        <fullName>ATP-dependent DNA helicase II subunit 2</fullName>
        <ecNumber>3.6.4.12</ecNumber>
    </recommendedName>
    <alternativeName>
        <fullName>ATP-dependent DNA helicase II subunit Ku80</fullName>
    </alternativeName>
</protein>